<proteinExistence type="inferred from homology"/>
<protein>
    <recommendedName>
        <fullName evidence="1">NADH-quinone oxidoreductase subunit I</fullName>
        <ecNumber evidence="1">7.1.1.-</ecNumber>
    </recommendedName>
    <alternativeName>
        <fullName evidence="1">NADH dehydrogenase I subunit I</fullName>
    </alternativeName>
    <alternativeName>
        <fullName evidence="1">NDH-1 subunit I</fullName>
    </alternativeName>
</protein>
<comment type="function">
    <text evidence="1">NDH-1 shuttles electrons from NADH, via FMN and iron-sulfur (Fe-S) centers, to quinones in the respiratory chain. The immediate electron acceptor for the enzyme in this species is believed to be ubiquinone. Couples the redox reaction to proton translocation (for every two electrons transferred, four hydrogen ions are translocated across the cytoplasmic membrane), and thus conserves the redox energy in a proton gradient.</text>
</comment>
<comment type="catalytic activity">
    <reaction evidence="1">
        <text>a quinone + NADH + 5 H(+)(in) = a quinol + NAD(+) + 4 H(+)(out)</text>
        <dbReference type="Rhea" id="RHEA:57888"/>
        <dbReference type="ChEBI" id="CHEBI:15378"/>
        <dbReference type="ChEBI" id="CHEBI:24646"/>
        <dbReference type="ChEBI" id="CHEBI:57540"/>
        <dbReference type="ChEBI" id="CHEBI:57945"/>
        <dbReference type="ChEBI" id="CHEBI:132124"/>
    </reaction>
</comment>
<comment type="cofactor">
    <cofactor evidence="1">
        <name>[4Fe-4S] cluster</name>
        <dbReference type="ChEBI" id="CHEBI:49883"/>
    </cofactor>
    <text evidence="1">Binds 2 [4Fe-4S] clusters per subunit.</text>
</comment>
<comment type="subunit">
    <text evidence="1">NDH-1 is composed of 13 different subunits. Subunits NuoA, H, J, K, L, M, N constitute the membrane sector of the complex.</text>
</comment>
<comment type="subcellular location">
    <subcellularLocation>
        <location evidence="1">Cell inner membrane</location>
        <topology evidence="1">Peripheral membrane protein</topology>
    </subcellularLocation>
</comment>
<comment type="similarity">
    <text evidence="1">Belongs to the complex I 23 kDa subunit family.</text>
</comment>
<sequence length="180" mass="20520">MTLKELLVGFGTQVRSIWMIGLHAFAKRETRMYPEEPVYLPPRYRGRIVLTRDPDGEERCVACNLCAVACPVGCISLQKAETKDGRWYPEFFRINFSRCIFCGLCEEACPTTAIQLTPDFELGEYKRQDLVYEKEDLLISGPGKYPEYNFYRMAGMAIDGKDKGEAENEAKPIDVKSLLP</sequence>
<accession>Q57M35</accession>
<dbReference type="EC" id="7.1.1.-" evidence="1"/>
<dbReference type="EMBL" id="AE017220">
    <property type="protein sequence ID" value="AAX66227.1"/>
    <property type="molecule type" value="Genomic_DNA"/>
</dbReference>
<dbReference type="RefSeq" id="WP_000172747.1">
    <property type="nucleotide sequence ID" value="NC_006905.1"/>
</dbReference>
<dbReference type="SMR" id="Q57M35"/>
<dbReference type="KEGG" id="sec:SCH_2321"/>
<dbReference type="HOGENOM" id="CLU_067218_4_3_6"/>
<dbReference type="Proteomes" id="UP000000538">
    <property type="component" value="Chromosome"/>
</dbReference>
<dbReference type="GO" id="GO:0005886">
    <property type="term" value="C:plasma membrane"/>
    <property type="evidence" value="ECO:0007669"/>
    <property type="project" value="UniProtKB-SubCell"/>
</dbReference>
<dbReference type="GO" id="GO:0051539">
    <property type="term" value="F:4 iron, 4 sulfur cluster binding"/>
    <property type="evidence" value="ECO:0007669"/>
    <property type="project" value="UniProtKB-KW"/>
</dbReference>
<dbReference type="GO" id="GO:0005506">
    <property type="term" value="F:iron ion binding"/>
    <property type="evidence" value="ECO:0007669"/>
    <property type="project" value="UniProtKB-UniRule"/>
</dbReference>
<dbReference type="GO" id="GO:0050136">
    <property type="term" value="F:NADH:ubiquinone reductase (non-electrogenic) activity"/>
    <property type="evidence" value="ECO:0007669"/>
    <property type="project" value="UniProtKB-UniRule"/>
</dbReference>
<dbReference type="GO" id="GO:0048038">
    <property type="term" value="F:quinone binding"/>
    <property type="evidence" value="ECO:0007669"/>
    <property type="project" value="UniProtKB-KW"/>
</dbReference>
<dbReference type="GO" id="GO:0009060">
    <property type="term" value="P:aerobic respiration"/>
    <property type="evidence" value="ECO:0007669"/>
    <property type="project" value="TreeGrafter"/>
</dbReference>
<dbReference type="FunFam" id="3.30.70.3270:FF:000002">
    <property type="entry name" value="NADH-quinone oxidoreductase subunit I"/>
    <property type="match status" value="1"/>
</dbReference>
<dbReference type="Gene3D" id="3.30.70.3270">
    <property type="match status" value="1"/>
</dbReference>
<dbReference type="HAMAP" id="MF_01351">
    <property type="entry name" value="NDH1_NuoI"/>
    <property type="match status" value="1"/>
</dbReference>
<dbReference type="InterPro" id="IPR017896">
    <property type="entry name" value="4Fe4S_Fe-S-bd"/>
</dbReference>
<dbReference type="InterPro" id="IPR017900">
    <property type="entry name" value="4Fe4S_Fe_S_CS"/>
</dbReference>
<dbReference type="InterPro" id="IPR010226">
    <property type="entry name" value="NADH_quinone_OxRdtase_chainI"/>
</dbReference>
<dbReference type="NCBIfam" id="TIGR01971">
    <property type="entry name" value="NuoI"/>
    <property type="match status" value="1"/>
</dbReference>
<dbReference type="NCBIfam" id="NF004536">
    <property type="entry name" value="PRK05888.1-1"/>
    <property type="match status" value="1"/>
</dbReference>
<dbReference type="PANTHER" id="PTHR10849:SF20">
    <property type="entry name" value="NADH DEHYDROGENASE [UBIQUINONE] IRON-SULFUR PROTEIN 8, MITOCHONDRIAL"/>
    <property type="match status" value="1"/>
</dbReference>
<dbReference type="PANTHER" id="PTHR10849">
    <property type="entry name" value="NADH DEHYDROGENASE UBIQUINONE IRON-SULFUR PROTEIN 8, MITOCHONDRIAL"/>
    <property type="match status" value="1"/>
</dbReference>
<dbReference type="Pfam" id="PF12838">
    <property type="entry name" value="Fer4_7"/>
    <property type="match status" value="1"/>
</dbReference>
<dbReference type="SUPFAM" id="SSF54862">
    <property type="entry name" value="4Fe-4S ferredoxins"/>
    <property type="match status" value="1"/>
</dbReference>
<dbReference type="PROSITE" id="PS00198">
    <property type="entry name" value="4FE4S_FER_1"/>
    <property type="match status" value="2"/>
</dbReference>
<dbReference type="PROSITE" id="PS51379">
    <property type="entry name" value="4FE4S_FER_2"/>
    <property type="match status" value="2"/>
</dbReference>
<name>NUOI_SALCH</name>
<organism>
    <name type="scientific">Salmonella choleraesuis (strain SC-B67)</name>
    <dbReference type="NCBI Taxonomy" id="321314"/>
    <lineage>
        <taxon>Bacteria</taxon>
        <taxon>Pseudomonadati</taxon>
        <taxon>Pseudomonadota</taxon>
        <taxon>Gammaproteobacteria</taxon>
        <taxon>Enterobacterales</taxon>
        <taxon>Enterobacteriaceae</taxon>
        <taxon>Salmonella</taxon>
    </lineage>
</organism>
<evidence type="ECO:0000255" key="1">
    <source>
        <dbReference type="HAMAP-Rule" id="MF_01351"/>
    </source>
</evidence>
<feature type="chain" id="PRO_0000245741" description="NADH-quinone oxidoreductase subunit I">
    <location>
        <begin position="1"/>
        <end position="180"/>
    </location>
</feature>
<feature type="domain" description="4Fe-4S ferredoxin-type 1" evidence="1">
    <location>
        <begin position="50"/>
        <end position="80"/>
    </location>
</feature>
<feature type="domain" description="4Fe-4S ferredoxin-type 2" evidence="1">
    <location>
        <begin position="90"/>
        <end position="119"/>
    </location>
</feature>
<feature type="binding site" evidence="1">
    <location>
        <position position="60"/>
    </location>
    <ligand>
        <name>[4Fe-4S] cluster</name>
        <dbReference type="ChEBI" id="CHEBI:49883"/>
        <label>1</label>
    </ligand>
</feature>
<feature type="binding site" evidence="1">
    <location>
        <position position="63"/>
    </location>
    <ligand>
        <name>[4Fe-4S] cluster</name>
        <dbReference type="ChEBI" id="CHEBI:49883"/>
        <label>1</label>
    </ligand>
</feature>
<feature type="binding site" evidence="1">
    <location>
        <position position="66"/>
    </location>
    <ligand>
        <name>[4Fe-4S] cluster</name>
        <dbReference type="ChEBI" id="CHEBI:49883"/>
        <label>1</label>
    </ligand>
</feature>
<feature type="binding site" evidence="1">
    <location>
        <position position="70"/>
    </location>
    <ligand>
        <name>[4Fe-4S] cluster</name>
        <dbReference type="ChEBI" id="CHEBI:49883"/>
        <label>2</label>
    </ligand>
</feature>
<feature type="binding site" evidence="1">
    <location>
        <position position="99"/>
    </location>
    <ligand>
        <name>[4Fe-4S] cluster</name>
        <dbReference type="ChEBI" id="CHEBI:49883"/>
        <label>2</label>
    </ligand>
</feature>
<feature type="binding site" evidence="1">
    <location>
        <position position="102"/>
    </location>
    <ligand>
        <name>[4Fe-4S] cluster</name>
        <dbReference type="ChEBI" id="CHEBI:49883"/>
        <label>2</label>
    </ligand>
</feature>
<feature type="binding site" evidence="1">
    <location>
        <position position="105"/>
    </location>
    <ligand>
        <name>[4Fe-4S] cluster</name>
        <dbReference type="ChEBI" id="CHEBI:49883"/>
        <label>2</label>
    </ligand>
</feature>
<feature type="binding site" evidence="1">
    <location>
        <position position="109"/>
    </location>
    <ligand>
        <name>[4Fe-4S] cluster</name>
        <dbReference type="ChEBI" id="CHEBI:49883"/>
        <label>1</label>
    </ligand>
</feature>
<gene>
    <name evidence="1" type="primary">nuoI</name>
    <name type="ordered locus">SCH_2321</name>
</gene>
<reference key="1">
    <citation type="journal article" date="2005" name="Nucleic Acids Res.">
        <title>The genome sequence of Salmonella enterica serovar Choleraesuis, a highly invasive and resistant zoonotic pathogen.</title>
        <authorList>
            <person name="Chiu C.-H."/>
            <person name="Tang P."/>
            <person name="Chu C."/>
            <person name="Hu S."/>
            <person name="Bao Q."/>
            <person name="Yu J."/>
            <person name="Chou Y.-Y."/>
            <person name="Wang H.-S."/>
            <person name="Lee Y.-S."/>
        </authorList>
    </citation>
    <scope>NUCLEOTIDE SEQUENCE [LARGE SCALE GENOMIC DNA]</scope>
    <source>
        <strain>SC-B67</strain>
    </source>
</reference>
<keyword id="KW-0004">4Fe-4S</keyword>
<keyword id="KW-0997">Cell inner membrane</keyword>
<keyword id="KW-1003">Cell membrane</keyword>
<keyword id="KW-0408">Iron</keyword>
<keyword id="KW-0411">Iron-sulfur</keyword>
<keyword id="KW-0472">Membrane</keyword>
<keyword id="KW-0479">Metal-binding</keyword>
<keyword id="KW-0520">NAD</keyword>
<keyword id="KW-0874">Quinone</keyword>
<keyword id="KW-0677">Repeat</keyword>
<keyword id="KW-1278">Translocase</keyword>
<keyword id="KW-0830">Ubiquinone</keyword>